<comment type="catalytic activity">
    <reaction evidence="1">
        <text>(6R)-10-formyltetrahydrofolate + 5-amino-1-(5-phospho-beta-D-ribosyl)imidazole-4-carboxamide = 5-formamido-1-(5-phospho-D-ribosyl)imidazole-4-carboxamide + (6S)-5,6,7,8-tetrahydrofolate</text>
        <dbReference type="Rhea" id="RHEA:22192"/>
        <dbReference type="ChEBI" id="CHEBI:57453"/>
        <dbReference type="ChEBI" id="CHEBI:58467"/>
        <dbReference type="ChEBI" id="CHEBI:58475"/>
        <dbReference type="ChEBI" id="CHEBI:195366"/>
        <dbReference type="EC" id="2.1.2.3"/>
    </reaction>
</comment>
<comment type="catalytic activity">
    <reaction evidence="1">
        <text>IMP + H2O = 5-formamido-1-(5-phospho-D-ribosyl)imidazole-4-carboxamide</text>
        <dbReference type="Rhea" id="RHEA:18445"/>
        <dbReference type="ChEBI" id="CHEBI:15377"/>
        <dbReference type="ChEBI" id="CHEBI:58053"/>
        <dbReference type="ChEBI" id="CHEBI:58467"/>
        <dbReference type="EC" id="3.5.4.10"/>
    </reaction>
</comment>
<comment type="pathway">
    <text evidence="1">Purine metabolism; IMP biosynthesis via de novo pathway; 5-formamido-1-(5-phospho-D-ribosyl)imidazole-4-carboxamide from 5-amino-1-(5-phospho-D-ribosyl)imidazole-4-carboxamide (10-formyl THF route): step 1/1.</text>
</comment>
<comment type="pathway">
    <text evidence="1">Purine metabolism; IMP biosynthesis via de novo pathway; IMP from 5-formamido-1-(5-phospho-D-ribosyl)imidazole-4-carboxamide: step 1/1.</text>
</comment>
<comment type="domain">
    <text evidence="1">The IMP cyclohydrolase activity resides in the N-terminal region.</text>
</comment>
<comment type="similarity">
    <text evidence="1">Belongs to the PurH family.</text>
</comment>
<organism>
    <name type="scientific">Oceanobacillus iheyensis (strain DSM 14371 / CIP 107618 / JCM 11309 / KCTC 3954 / HTE831)</name>
    <dbReference type="NCBI Taxonomy" id="221109"/>
    <lineage>
        <taxon>Bacteria</taxon>
        <taxon>Bacillati</taxon>
        <taxon>Bacillota</taxon>
        <taxon>Bacilli</taxon>
        <taxon>Bacillales</taxon>
        <taxon>Bacillaceae</taxon>
        <taxon>Oceanobacillus</taxon>
    </lineage>
</organism>
<feature type="chain" id="PRO_0000192110" description="Bifunctional purine biosynthesis protein PurH">
    <location>
        <begin position="1"/>
        <end position="510"/>
    </location>
</feature>
<feature type="domain" description="MGS-like" evidence="2">
    <location>
        <begin position="1"/>
        <end position="145"/>
    </location>
</feature>
<evidence type="ECO:0000255" key="1">
    <source>
        <dbReference type="HAMAP-Rule" id="MF_00139"/>
    </source>
</evidence>
<evidence type="ECO:0000255" key="2">
    <source>
        <dbReference type="PROSITE-ProRule" id="PRU01202"/>
    </source>
</evidence>
<sequence length="510" mass="55747">MSKRALISVSDKTNIIEFAKGLKESGFEILSTGGTLRSIAEAGIDVTPVDEVTGFPEMLDGRVKTLHPMIHGGLLGKRSNHEHLSQMEEHGIRSIDLVAVNLYPFKETVQKPDVSHQDIIENIDIGGPSMLRSAAKNFEDVLVVTGPTDYNRVLAAITSETDTYEFRQQLAAKVFRHTASYDAMIANYFLSQTEEQYPESYTVTYEKVQDLRYGENPHQQAAFYKEPIQSRPTLATAKQLHGKELSYNNIQDTNAAIEIVKEFAEPAAVAVKHMNPCGIGIGESISTAFERAYQADPTSIFGGIVACNRPVDAATAEQLSQIFLEIVVAPSFESQALEILTQKKNIRLLELDVTSDNKQSNRLTTVDGGALIQAYDAKEVSEADLEVVTNKQPTEQEINDMLFAWKAVKHVKSNAIVLAKDSQTIGVGAGQMNRIGAAEIAIKQAGDKSEGAVLASDAFFPMPDTVEAAAKAGIKAIIQPGGSKRDQDSVDVCNQFGIAMVYTKVRHFKH</sequence>
<proteinExistence type="inferred from homology"/>
<reference key="1">
    <citation type="journal article" date="2002" name="Nucleic Acids Res.">
        <title>Genome sequence of Oceanobacillus iheyensis isolated from the Iheya Ridge and its unexpected adaptive capabilities to extreme environments.</title>
        <authorList>
            <person name="Takami H."/>
            <person name="Takaki Y."/>
            <person name="Uchiyama I."/>
        </authorList>
    </citation>
    <scope>NUCLEOTIDE SEQUENCE [LARGE SCALE GENOMIC DNA]</scope>
    <source>
        <strain>DSM 14371 / CIP 107618 / JCM 11309 / KCTC 3954 / HTE831</strain>
    </source>
</reference>
<gene>
    <name evidence="1" type="primary">purH</name>
    <name type="ordered locus">OB0749</name>
</gene>
<protein>
    <recommendedName>
        <fullName evidence="1">Bifunctional purine biosynthesis protein PurH</fullName>
    </recommendedName>
    <domain>
        <recommendedName>
            <fullName evidence="1">Phosphoribosylaminoimidazolecarboxamide formyltransferase</fullName>
            <ecNumber evidence="1">2.1.2.3</ecNumber>
        </recommendedName>
        <alternativeName>
            <fullName evidence="1">AICAR transformylase</fullName>
        </alternativeName>
    </domain>
    <domain>
        <recommendedName>
            <fullName evidence="1">IMP cyclohydrolase</fullName>
            <ecNumber evidence="1">3.5.4.10</ecNumber>
        </recommendedName>
        <alternativeName>
            <fullName evidence="1">ATIC</fullName>
        </alternativeName>
        <alternativeName>
            <fullName evidence="1">IMP synthase</fullName>
        </alternativeName>
        <alternativeName>
            <fullName evidence="1">Inosinicase</fullName>
        </alternativeName>
    </domain>
</protein>
<name>PUR9_OCEIH</name>
<dbReference type="EC" id="2.1.2.3" evidence="1"/>
<dbReference type="EC" id="3.5.4.10" evidence="1"/>
<dbReference type="EMBL" id="BA000028">
    <property type="protein sequence ID" value="BAC12705.1"/>
    <property type="molecule type" value="Genomic_DNA"/>
</dbReference>
<dbReference type="RefSeq" id="WP_011065157.1">
    <property type="nucleotide sequence ID" value="NC_004193.1"/>
</dbReference>
<dbReference type="SMR" id="Q8CXK7"/>
<dbReference type="STRING" id="221109.gene:10732970"/>
<dbReference type="KEGG" id="oih:OB0749"/>
<dbReference type="eggNOG" id="COG0138">
    <property type="taxonomic scope" value="Bacteria"/>
</dbReference>
<dbReference type="HOGENOM" id="CLU_016316_5_2_9"/>
<dbReference type="OrthoDB" id="9802065at2"/>
<dbReference type="PhylomeDB" id="Q8CXK7"/>
<dbReference type="UniPathway" id="UPA00074">
    <property type="reaction ID" value="UER00133"/>
</dbReference>
<dbReference type="UniPathway" id="UPA00074">
    <property type="reaction ID" value="UER00135"/>
</dbReference>
<dbReference type="Proteomes" id="UP000000822">
    <property type="component" value="Chromosome"/>
</dbReference>
<dbReference type="GO" id="GO:0005829">
    <property type="term" value="C:cytosol"/>
    <property type="evidence" value="ECO:0007669"/>
    <property type="project" value="TreeGrafter"/>
</dbReference>
<dbReference type="GO" id="GO:0003937">
    <property type="term" value="F:IMP cyclohydrolase activity"/>
    <property type="evidence" value="ECO:0007669"/>
    <property type="project" value="UniProtKB-UniRule"/>
</dbReference>
<dbReference type="GO" id="GO:0004643">
    <property type="term" value="F:phosphoribosylaminoimidazolecarboxamide formyltransferase activity"/>
    <property type="evidence" value="ECO:0007669"/>
    <property type="project" value="UniProtKB-UniRule"/>
</dbReference>
<dbReference type="GO" id="GO:0006189">
    <property type="term" value="P:'de novo' IMP biosynthetic process"/>
    <property type="evidence" value="ECO:0007669"/>
    <property type="project" value="UniProtKB-UniRule"/>
</dbReference>
<dbReference type="CDD" id="cd01421">
    <property type="entry name" value="IMPCH"/>
    <property type="match status" value="1"/>
</dbReference>
<dbReference type="FunFam" id="3.40.140.20:FF:000001">
    <property type="entry name" value="Bifunctional purine biosynthesis protein PurH"/>
    <property type="match status" value="1"/>
</dbReference>
<dbReference type="FunFam" id="3.40.140.20:FF:000002">
    <property type="entry name" value="Bifunctional purine biosynthesis protein PurH"/>
    <property type="match status" value="1"/>
</dbReference>
<dbReference type="FunFam" id="3.40.50.1380:FF:000001">
    <property type="entry name" value="Bifunctional purine biosynthesis protein PurH"/>
    <property type="match status" value="1"/>
</dbReference>
<dbReference type="Gene3D" id="3.40.140.20">
    <property type="match status" value="2"/>
</dbReference>
<dbReference type="Gene3D" id="3.40.50.1380">
    <property type="entry name" value="Methylglyoxal synthase-like domain"/>
    <property type="match status" value="1"/>
</dbReference>
<dbReference type="HAMAP" id="MF_00139">
    <property type="entry name" value="PurH"/>
    <property type="match status" value="1"/>
</dbReference>
<dbReference type="InterPro" id="IPR024051">
    <property type="entry name" value="AICAR_Tfase_dup_dom_sf"/>
</dbReference>
<dbReference type="InterPro" id="IPR016193">
    <property type="entry name" value="Cytidine_deaminase-like"/>
</dbReference>
<dbReference type="InterPro" id="IPR011607">
    <property type="entry name" value="MGS-like_dom"/>
</dbReference>
<dbReference type="InterPro" id="IPR036914">
    <property type="entry name" value="MGS-like_dom_sf"/>
</dbReference>
<dbReference type="InterPro" id="IPR002695">
    <property type="entry name" value="PurH-like"/>
</dbReference>
<dbReference type="NCBIfam" id="NF002049">
    <property type="entry name" value="PRK00881.1"/>
    <property type="match status" value="1"/>
</dbReference>
<dbReference type="NCBIfam" id="TIGR00355">
    <property type="entry name" value="purH"/>
    <property type="match status" value="1"/>
</dbReference>
<dbReference type="PANTHER" id="PTHR11692:SF0">
    <property type="entry name" value="BIFUNCTIONAL PURINE BIOSYNTHESIS PROTEIN ATIC"/>
    <property type="match status" value="1"/>
</dbReference>
<dbReference type="PANTHER" id="PTHR11692">
    <property type="entry name" value="BIFUNCTIONAL PURINE BIOSYNTHESIS PROTEIN PURH"/>
    <property type="match status" value="1"/>
</dbReference>
<dbReference type="Pfam" id="PF01808">
    <property type="entry name" value="AICARFT_IMPCHas"/>
    <property type="match status" value="1"/>
</dbReference>
<dbReference type="Pfam" id="PF02142">
    <property type="entry name" value="MGS"/>
    <property type="match status" value="1"/>
</dbReference>
<dbReference type="PIRSF" id="PIRSF000414">
    <property type="entry name" value="AICARFT_IMPCHas"/>
    <property type="match status" value="1"/>
</dbReference>
<dbReference type="SMART" id="SM00798">
    <property type="entry name" value="AICARFT_IMPCHas"/>
    <property type="match status" value="1"/>
</dbReference>
<dbReference type="SMART" id="SM00851">
    <property type="entry name" value="MGS"/>
    <property type="match status" value="1"/>
</dbReference>
<dbReference type="SUPFAM" id="SSF53927">
    <property type="entry name" value="Cytidine deaminase-like"/>
    <property type="match status" value="1"/>
</dbReference>
<dbReference type="SUPFAM" id="SSF52335">
    <property type="entry name" value="Methylglyoxal synthase-like"/>
    <property type="match status" value="1"/>
</dbReference>
<dbReference type="PROSITE" id="PS51855">
    <property type="entry name" value="MGS"/>
    <property type="match status" value="1"/>
</dbReference>
<accession>Q8CXK7</accession>
<keyword id="KW-0378">Hydrolase</keyword>
<keyword id="KW-0511">Multifunctional enzyme</keyword>
<keyword id="KW-0658">Purine biosynthesis</keyword>
<keyword id="KW-1185">Reference proteome</keyword>
<keyword id="KW-0808">Transferase</keyword>